<accession>Q5FM13</accession>
<evidence type="ECO:0000255" key="1">
    <source>
        <dbReference type="HAMAP-Rule" id="MF_00362"/>
    </source>
</evidence>
<evidence type="ECO:0000305" key="2"/>
<organism>
    <name type="scientific">Lactobacillus acidophilus (strain ATCC 700396 / NCK56 / N2 / NCFM)</name>
    <dbReference type="NCBI Taxonomy" id="272621"/>
    <lineage>
        <taxon>Bacteria</taxon>
        <taxon>Bacillati</taxon>
        <taxon>Bacillota</taxon>
        <taxon>Bacilli</taxon>
        <taxon>Lactobacillales</taxon>
        <taxon>Lactobacillaceae</taxon>
        <taxon>Lactobacillus</taxon>
    </lineage>
</organism>
<gene>
    <name evidence="1" type="primary">rplJ</name>
    <name type="ordered locus">LBA0369</name>
</gene>
<keyword id="KW-1185">Reference proteome</keyword>
<keyword id="KW-0687">Ribonucleoprotein</keyword>
<keyword id="KW-0689">Ribosomal protein</keyword>
<keyword id="KW-0694">RNA-binding</keyword>
<keyword id="KW-0699">rRNA-binding</keyword>
<proteinExistence type="inferred from homology"/>
<feature type="chain" id="PRO_0000234854" description="Large ribosomal subunit protein uL10">
    <location>
        <begin position="1"/>
        <end position="170"/>
    </location>
</feature>
<comment type="function">
    <text evidence="1">Forms part of the ribosomal stalk, playing a central role in the interaction of the ribosome with GTP-bound translation factors.</text>
</comment>
<comment type="subunit">
    <text evidence="1">Part of the ribosomal stalk of the 50S ribosomal subunit. The N-terminus interacts with L11 and the large rRNA to form the base of the stalk. The C-terminus forms an elongated spine to which L12 dimers bind in a sequential fashion forming a multimeric L10(L12)X complex.</text>
</comment>
<comment type="similarity">
    <text evidence="1">Belongs to the universal ribosomal protein uL10 family.</text>
</comment>
<reference key="1">
    <citation type="journal article" date="2005" name="Proc. Natl. Acad. Sci. U.S.A.">
        <title>Complete genome sequence of the probiotic lactic acid bacterium Lactobacillus acidophilus NCFM.</title>
        <authorList>
            <person name="Altermann E."/>
            <person name="Russell W.M."/>
            <person name="Azcarate-Peril M.A."/>
            <person name="Barrangou R."/>
            <person name="Buck B.L."/>
            <person name="McAuliffe O."/>
            <person name="Souther N."/>
            <person name="Dobson A."/>
            <person name="Duong T."/>
            <person name="Callanan M."/>
            <person name="Lick S."/>
            <person name="Hamrick A."/>
            <person name="Cano R."/>
            <person name="Klaenhammer T.R."/>
        </authorList>
    </citation>
    <scope>NUCLEOTIDE SEQUENCE [LARGE SCALE GENOMIC DNA]</scope>
    <source>
        <strain>ATCC 700396 / NCK56 / N2 / NCFM</strain>
    </source>
</reference>
<sequence length="170" mass="18613">MSKAAIAEKEKLVDAFAEELKAAKAILVINYLGLTVEEVTNMRKDLRDNDVKMKVIKNTYLRRAAAKAGIEGLDDTFVGPTAVIYTDNADDITEPARIVSKYEDDFDVIEIKGGMLEGKLTSKEEIKELASIPGREGLLSMLVSVLQAPVRDFAYAVKAVAESKDEDSAE</sequence>
<protein>
    <recommendedName>
        <fullName evidence="1">Large ribosomal subunit protein uL10</fullName>
    </recommendedName>
    <alternativeName>
        <fullName evidence="2">50S ribosomal protein L10</fullName>
    </alternativeName>
</protein>
<name>RL10_LACAC</name>
<dbReference type="EMBL" id="CP000033">
    <property type="protein sequence ID" value="AAV42261.1"/>
    <property type="molecule type" value="Genomic_DNA"/>
</dbReference>
<dbReference type="RefSeq" id="WP_003549105.1">
    <property type="nucleotide sequence ID" value="NC_006814.3"/>
</dbReference>
<dbReference type="RefSeq" id="YP_193292.1">
    <property type="nucleotide sequence ID" value="NC_006814.3"/>
</dbReference>
<dbReference type="SMR" id="Q5FM13"/>
<dbReference type="STRING" id="272621.LBA0369"/>
<dbReference type="GeneID" id="93290531"/>
<dbReference type="KEGG" id="lac:LBA0369"/>
<dbReference type="PATRIC" id="fig|272621.13.peg.356"/>
<dbReference type="eggNOG" id="COG0244">
    <property type="taxonomic scope" value="Bacteria"/>
</dbReference>
<dbReference type="HOGENOM" id="CLU_092227_2_0_9"/>
<dbReference type="OrthoDB" id="9808307at2"/>
<dbReference type="BioCyc" id="LACI272621:G1G49-364-MONOMER"/>
<dbReference type="Proteomes" id="UP000006381">
    <property type="component" value="Chromosome"/>
</dbReference>
<dbReference type="GO" id="GO:0015934">
    <property type="term" value="C:large ribosomal subunit"/>
    <property type="evidence" value="ECO:0007669"/>
    <property type="project" value="InterPro"/>
</dbReference>
<dbReference type="GO" id="GO:0070180">
    <property type="term" value="F:large ribosomal subunit rRNA binding"/>
    <property type="evidence" value="ECO:0007669"/>
    <property type="project" value="UniProtKB-UniRule"/>
</dbReference>
<dbReference type="GO" id="GO:0003735">
    <property type="term" value="F:structural constituent of ribosome"/>
    <property type="evidence" value="ECO:0007669"/>
    <property type="project" value="InterPro"/>
</dbReference>
<dbReference type="GO" id="GO:0006412">
    <property type="term" value="P:translation"/>
    <property type="evidence" value="ECO:0007669"/>
    <property type="project" value="UniProtKB-UniRule"/>
</dbReference>
<dbReference type="CDD" id="cd05797">
    <property type="entry name" value="Ribosomal_L10"/>
    <property type="match status" value="1"/>
</dbReference>
<dbReference type="Gene3D" id="3.30.70.1730">
    <property type="match status" value="1"/>
</dbReference>
<dbReference type="Gene3D" id="6.10.250.290">
    <property type="match status" value="1"/>
</dbReference>
<dbReference type="HAMAP" id="MF_00362">
    <property type="entry name" value="Ribosomal_uL10"/>
    <property type="match status" value="1"/>
</dbReference>
<dbReference type="InterPro" id="IPR001790">
    <property type="entry name" value="Ribosomal_uL10"/>
</dbReference>
<dbReference type="InterPro" id="IPR043141">
    <property type="entry name" value="Ribosomal_uL10-like_sf"/>
</dbReference>
<dbReference type="InterPro" id="IPR022973">
    <property type="entry name" value="Ribosomal_uL10_bac"/>
</dbReference>
<dbReference type="InterPro" id="IPR047865">
    <property type="entry name" value="Ribosomal_uL10_bac_type"/>
</dbReference>
<dbReference type="InterPro" id="IPR002363">
    <property type="entry name" value="Ribosomal_uL10_CS_bac"/>
</dbReference>
<dbReference type="NCBIfam" id="NF000955">
    <property type="entry name" value="PRK00099.1-1"/>
    <property type="match status" value="1"/>
</dbReference>
<dbReference type="PANTHER" id="PTHR11560">
    <property type="entry name" value="39S RIBOSOMAL PROTEIN L10, MITOCHONDRIAL"/>
    <property type="match status" value="1"/>
</dbReference>
<dbReference type="Pfam" id="PF00466">
    <property type="entry name" value="Ribosomal_L10"/>
    <property type="match status" value="1"/>
</dbReference>
<dbReference type="SUPFAM" id="SSF160369">
    <property type="entry name" value="Ribosomal protein L10-like"/>
    <property type="match status" value="1"/>
</dbReference>
<dbReference type="PROSITE" id="PS01109">
    <property type="entry name" value="RIBOSOMAL_L10"/>
    <property type="match status" value="1"/>
</dbReference>